<organism>
    <name type="scientific">Listeria monocytogenes serotype 4a (strain HCC23)</name>
    <dbReference type="NCBI Taxonomy" id="552536"/>
    <lineage>
        <taxon>Bacteria</taxon>
        <taxon>Bacillati</taxon>
        <taxon>Bacillota</taxon>
        <taxon>Bacilli</taxon>
        <taxon>Bacillales</taxon>
        <taxon>Listeriaceae</taxon>
        <taxon>Listeria</taxon>
    </lineage>
</organism>
<name>RIMP_LISMH</name>
<keyword id="KW-0963">Cytoplasm</keyword>
<keyword id="KW-0690">Ribosome biogenesis</keyword>
<proteinExistence type="inferred from homology"/>
<sequence>MSKVLEQVEAIVAPITDELQLELVDIVFEKEGPNWFLRIFIDKDGGVDIDECAAVSEKVSEKMDENDPITQNYFLEVSSPGAERPLKKEQDFENAVSKYVHVTSYEPIDGRKMWEGTLVSYDGTTLVITITDKTRKITCEIPKDKVAKARLAIQF</sequence>
<gene>
    <name evidence="1" type="primary">rimP</name>
    <name type="ordered locus">LMHCC_1249</name>
</gene>
<protein>
    <recommendedName>
        <fullName evidence="1">Ribosome maturation factor RimP</fullName>
    </recommendedName>
</protein>
<accession>B8DG06</accession>
<dbReference type="EMBL" id="CP001175">
    <property type="protein sequence ID" value="ACK39596.1"/>
    <property type="molecule type" value="Genomic_DNA"/>
</dbReference>
<dbReference type="RefSeq" id="WP_003729921.1">
    <property type="nucleotide sequence ID" value="NC_011660.1"/>
</dbReference>
<dbReference type="SMR" id="B8DG06"/>
<dbReference type="KEGG" id="lmh:LMHCC_1249"/>
<dbReference type="HOGENOM" id="CLU_070525_2_0_9"/>
<dbReference type="GO" id="GO:0005829">
    <property type="term" value="C:cytosol"/>
    <property type="evidence" value="ECO:0007669"/>
    <property type="project" value="TreeGrafter"/>
</dbReference>
<dbReference type="GO" id="GO:0000028">
    <property type="term" value="P:ribosomal small subunit assembly"/>
    <property type="evidence" value="ECO:0007669"/>
    <property type="project" value="TreeGrafter"/>
</dbReference>
<dbReference type="GO" id="GO:0006412">
    <property type="term" value="P:translation"/>
    <property type="evidence" value="ECO:0007669"/>
    <property type="project" value="TreeGrafter"/>
</dbReference>
<dbReference type="CDD" id="cd01734">
    <property type="entry name" value="YlxS_C"/>
    <property type="match status" value="1"/>
</dbReference>
<dbReference type="FunFam" id="2.30.30.180:FF:000002">
    <property type="entry name" value="Ribosome maturation factor RimP"/>
    <property type="match status" value="1"/>
</dbReference>
<dbReference type="FunFam" id="3.30.300.70:FF:000001">
    <property type="entry name" value="Ribosome maturation factor RimP"/>
    <property type="match status" value="1"/>
</dbReference>
<dbReference type="Gene3D" id="2.30.30.180">
    <property type="entry name" value="Ribosome maturation factor RimP, C-terminal domain"/>
    <property type="match status" value="1"/>
</dbReference>
<dbReference type="Gene3D" id="3.30.300.70">
    <property type="entry name" value="RimP-like superfamily, N-terminal"/>
    <property type="match status" value="1"/>
</dbReference>
<dbReference type="HAMAP" id="MF_01077">
    <property type="entry name" value="RimP"/>
    <property type="match status" value="1"/>
</dbReference>
<dbReference type="InterPro" id="IPR003728">
    <property type="entry name" value="Ribosome_maturation_RimP"/>
</dbReference>
<dbReference type="InterPro" id="IPR028998">
    <property type="entry name" value="RimP_C"/>
</dbReference>
<dbReference type="InterPro" id="IPR036847">
    <property type="entry name" value="RimP_C_sf"/>
</dbReference>
<dbReference type="InterPro" id="IPR028989">
    <property type="entry name" value="RimP_N"/>
</dbReference>
<dbReference type="InterPro" id="IPR035956">
    <property type="entry name" value="RimP_N_sf"/>
</dbReference>
<dbReference type="NCBIfam" id="NF000928">
    <property type="entry name" value="PRK00092.1-2"/>
    <property type="match status" value="1"/>
</dbReference>
<dbReference type="PANTHER" id="PTHR33867">
    <property type="entry name" value="RIBOSOME MATURATION FACTOR RIMP"/>
    <property type="match status" value="1"/>
</dbReference>
<dbReference type="PANTHER" id="PTHR33867:SF1">
    <property type="entry name" value="RIBOSOME MATURATION FACTOR RIMP"/>
    <property type="match status" value="1"/>
</dbReference>
<dbReference type="Pfam" id="PF17384">
    <property type="entry name" value="DUF150_C"/>
    <property type="match status" value="1"/>
</dbReference>
<dbReference type="Pfam" id="PF02576">
    <property type="entry name" value="RimP_N"/>
    <property type="match status" value="1"/>
</dbReference>
<dbReference type="SUPFAM" id="SSF74942">
    <property type="entry name" value="YhbC-like, C-terminal domain"/>
    <property type="match status" value="1"/>
</dbReference>
<dbReference type="SUPFAM" id="SSF75420">
    <property type="entry name" value="YhbC-like, N-terminal domain"/>
    <property type="match status" value="1"/>
</dbReference>
<reference key="1">
    <citation type="journal article" date="2011" name="J. Bacteriol.">
        <title>Genome sequence of lineage III Listeria monocytogenes strain HCC23.</title>
        <authorList>
            <person name="Steele C.L."/>
            <person name="Donaldson J.R."/>
            <person name="Paul D."/>
            <person name="Banes M.M."/>
            <person name="Arick T."/>
            <person name="Bridges S.M."/>
            <person name="Lawrence M.L."/>
        </authorList>
    </citation>
    <scope>NUCLEOTIDE SEQUENCE [LARGE SCALE GENOMIC DNA]</scope>
    <source>
        <strain>HCC23</strain>
    </source>
</reference>
<evidence type="ECO:0000255" key="1">
    <source>
        <dbReference type="HAMAP-Rule" id="MF_01077"/>
    </source>
</evidence>
<feature type="chain" id="PRO_1000149796" description="Ribosome maturation factor RimP">
    <location>
        <begin position="1"/>
        <end position="155"/>
    </location>
</feature>
<comment type="function">
    <text evidence="1">Required for maturation of 30S ribosomal subunits.</text>
</comment>
<comment type="subcellular location">
    <subcellularLocation>
        <location evidence="1">Cytoplasm</location>
    </subcellularLocation>
</comment>
<comment type="similarity">
    <text evidence="1">Belongs to the RimP family.</text>
</comment>